<reference key="1">
    <citation type="journal article" date="2007" name="J. Bacteriol.">
        <title>The complete genome sequence of Bacillus thuringiensis Al Hakam.</title>
        <authorList>
            <person name="Challacombe J.F."/>
            <person name="Altherr M.R."/>
            <person name="Xie G."/>
            <person name="Bhotika S.S."/>
            <person name="Brown N."/>
            <person name="Bruce D."/>
            <person name="Campbell C.S."/>
            <person name="Campbell M.L."/>
            <person name="Chen J."/>
            <person name="Chertkov O."/>
            <person name="Cleland C."/>
            <person name="Dimitrijevic M."/>
            <person name="Doggett N.A."/>
            <person name="Fawcett J.J."/>
            <person name="Glavina T."/>
            <person name="Goodwin L.A."/>
            <person name="Green L.D."/>
            <person name="Han C.S."/>
            <person name="Hill K.K."/>
            <person name="Hitchcock P."/>
            <person name="Jackson P.J."/>
            <person name="Keim P."/>
            <person name="Kewalramani A.R."/>
            <person name="Longmire J."/>
            <person name="Lucas S."/>
            <person name="Malfatti S."/>
            <person name="Martinez D."/>
            <person name="McMurry K."/>
            <person name="Meincke L.J."/>
            <person name="Misra M."/>
            <person name="Moseman B.L."/>
            <person name="Mundt M."/>
            <person name="Munk A.C."/>
            <person name="Okinaka R.T."/>
            <person name="Parson-Quintana B."/>
            <person name="Reilly L.P."/>
            <person name="Richardson P."/>
            <person name="Robinson D.L."/>
            <person name="Saunders E."/>
            <person name="Tapia R."/>
            <person name="Tesmer J.G."/>
            <person name="Thayer N."/>
            <person name="Thompson L.S."/>
            <person name="Tice H."/>
            <person name="Ticknor L.O."/>
            <person name="Wills P.L."/>
            <person name="Gilna P."/>
            <person name="Brettin T.S."/>
        </authorList>
    </citation>
    <scope>NUCLEOTIDE SEQUENCE [LARGE SCALE GENOMIC DNA]</scope>
    <source>
        <strain>Al Hakam</strain>
    </source>
</reference>
<name>ATPE_BACAH</name>
<gene>
    <name evidence="1" type="primary">atpC</name>
    <name type="ordered locus">BALH_4807</name>
</gene>
<evidence type="ECO:0000255" key="1">
    <source>
        <dbReference type="HAMAP-Rule" id="MF_00530"/>
    </source>
</evidence>
<feature type="chain" id="PRO_1000056456" description="ATP synthase epsilon chain">
    <location>
        <begin position="1"/>
        <end position="133"/>
    </location>
</feature>
<accession>A0RL94</accession>
<dbReference type="EMBL" id="CP000485">
    <property type="protein sequence ID" value="ABK87987.1"/>
    <property type="molecule type" value="Genomic_DNA"/>
</dbReference>
<dbReference type="RefSeq" id="WP_000847211.1">
    <property type="nucleotide sequence ID" value="NC_008600.1"/>
</dbReference>
<dbReference type="SMR" id="A0RL94"/>
<dbReference type="GeneID" id="93005819"/>
<dbReference type="KEGG" id="btl:BALH_4807"/>
<dbReference type="HOGENOM" id="CLU_084338_1_3_9"/>
<dbReference type="GO" id="GO:0005886">
    <property type="term" value="C:plasma membrane"/>
    <property type="evidence" value="ECO:0007669"/>
    <property type="project" value="UniProtKB-SubCell"/>
</dbReference>
<dbReference type="GO" id="GO:0045259">
    <property type="term" value="C:proton-transporting ATP synthase complex"/>
    <property type="evidence" value="ECO:0007669"/>
    <property type="project" value="UniProtKB-KW"/>
</dbReference>
<dbReference type="GO" id="GO:0005524">
    <property type="term" value="F:ATP binding"/>
    <property type="evidence" value="ECO:0007669"/>
    <property type="project" value="UniProtKB-UniRule"/>
</dbReference>
<dbReference type="GO" id="GO:0046933">
    <property type="term" value="F:proton-transporting ATP synthase activity, rotational mechanism"/>
    <property type="evidence" value="ECO:0007669"/>
    <property type="project" value="UniProtKB-UniRule"/>
</dbReference>
<dbReference type="CDD" id="cd12152">
    <property type="entry name" value="F1-ATPase_delta"/>
    <property type="match status" value="1"/>
</dbReference>
<dbReference type="FunFam" id="1.20.5.440:FF:000001">
    <property type="entry name" value="ATP synthase epsilon chain"/>
    <property type="match status" value="1"/>
</dbReference>
<dbReference type="FunFam" id="2.60.15.10:FF:000001">
    <property type="entry name" value="ATP synthase epsilon chain"/>
    <property type="match status" value="1"/>
</dbReference>
<dbReference type="Gene3D" id="1.20.5.440">
    <property type="entry name" value="ATP synthase delta/epsilon subunit, C-terminal domain"/>
    <property type="match status" value="1"/>
</dbReference>
<dbReference type="Gene3D" id="2.60.15.10">
    <property type="entry name" value="F0F1 ATP synthase delta/epsilon subunit, N-terminal"/>
    <property type="match status" value="1"/>
</dbReference>
<dbReference type="HAMAP" id="MF_00530">
    <property type="entry name" value="ATP_synth_epsil_bac"/>
    <property type="match status" value="1"/>
</dbReference>
<dbReference type="InterPro" id="IPR036794">
    <property type="entry name" value="ATP_F1_dsu/esu_C_sf"/>
</dbReference>
<dbReference type="InterPro" id="IPR001469">
    <property type="entry name" value="ATP_synth_F1_dsu/esu"/>
</dbReference>
<dbReference type="InterPro" id="IPR020546">
    <property type="entry name" value="ATP_synth_F1_dsu/esu_N"/>
</dbReference>
<dbReference type="InterPro" id="IPR020547">
    <property type="entry name" value="ATP_synth_F1_esu_C"/>
</dbReference>
<dbReference type="InterPro" id="IPR036771">
    <property type="entry name" value="ATPsynth_dsu/esu_N"/>
</dbReference>
<dbReference type="NCBIfam" id="TIGR01216">
    <property type="entry name" value="ATP_synt_epsi"/>
    <property type="match status" value="1"/>
</dbReference>
<dbReference type="NCBIfam" id="NF001846">
    <property type="entry name" value="PRK00571.1-3"/>
    <property type="match status" value="1"/>
</dbReference>
<dbReference type="NCBIfam" id="NF009980">
    <property type="entry name" value="PRK13446.1"/>
    <property type="match status" value="1"/>
</dbReference>
<dbReference type="PANTHER" id="PTHR13822">
    <property type="entry name" value="ATP SYNTHASE DELTA/EPSILON CHAIN"/>
    <property type="match status" value="1"/>
</dbReference>
<dbReference type="PANTHER" id="PTHR13822:SF10">
    <property type="entry name" value="ATP SYNTHASE EPSILON CHAIN, CHLOROPLASTIC"/>
    <property type="match status" value="1"/>
</dbReference>
<dbReference type="Pfam" id="PF00401">
    <property type="entry name" value="ATP-synt_DE"/>
    <property type="match status" value="1"/>
</dbReference>
<dbReference type="Pfam" id="PF02823">
    <property type="entry name" value="ATP-synt_DE_N"/>
    <property type="match status" value="1"/>
</dbReference>
<dbReference type="SUPFAM" id="SSF46604">
    <property type="entry name" value="Epsilon subunit of F1F0-ATP synthase C-terminal domain"/>
    <property type="match status" value="1"/>
</dbReference>
<dbReference type="SUPFAM" id="SSF51344">
    <property type="entry name" value="Epsilon subunit of F1F0-ATP synthase N-terminal domain"/>
    <property type="match status" value="1"/>
</dbReference>
<proteinExistence type="inferred from homology"/>
<sequence>MKTFPVSIVTPDGPVYEKEVEMVSVKAESGEMGILPGHIPTVAPLKISAVRLKNGGHTDYVAVSGGFIEVRPDKVTVLSSSAEEANHIDIHRANEAKRRAEQRLQDKQAHVDFKRAEMALQRAVNRLNVSDMK</sequence>
<comment type="function">
    <text evidence="1">Produces ATP from ADP in the presence of a proton gradient across the membrane.</text>
</comment>
<comment type="subunit">
    <text evidence="1">F-type ATPases have 2 components, CF(1) - the catalytic core - and CF(0) - the membrane proton channel. CF(1) has five subunits: alpha(3), beta(3), gamma(1), delta(1), epsilon(1). CF(0) has three main subunits: a, b and c.</text>
</comment>
<comment type="subcellular location">
    <subcellularLocation>
        <location evidence="1">Cell membrane</location>
        <topology evidence="1">Peripheral membrane protein</topology>
    </subcellularLocation>
</comment>
<comment type="similarity">
    <text evidence="1">Belongs to the ATPase epsilon chain family.</text>
</comment>
<organism>
    <name type="scientific">Bacillus thuringiensis (strain Al Hakam)</name>
    <dbReference type="NCBI Taxonomy" id="412694"/>
    <lineage>
        <taxon>Bacteria</taxon>
        <taxon>Bacillati</taxon>
        <taxon>Bacillota</taxon>
        <taxon>Bacilli</taxon>
        <taxon>Bacillales</taxon>
        <taxon>Bacillaceae</taxon>
        <taxon>Bacillus</taxon>
        <taxon>Bacillus cereus group</taxon>
    </lineage>
</organism>
<protein>
    <recommendedName>
        <fullName evidence="1">ATP synthase epsilon chain</fullName>
    </recommendedName>
    <alternativeName>
        <fullName evidence="1">ATP synthase F1 sector epsilon subunit</fullName>
    </alternativeName>
    <alternativeName>
        <fullName evidence="1">F-ATPase epsilon subunit</fullName>
    </alternativeName>
</protein>
<keyword id="KW-0066">ATP synthesis</keyword>
<keyword id="KW-1003">Cell membrane</keyword>
<keyword id="KW-0139">CF(1)</keyword>
<keyword id="KW-0375">Hydrogen ion transport</keyword>
<keyword id="KW-0406">Ion transport</keyword>
<keyword id="KW-0472">Membrane</keyword>
<keyword id="KW-0813">Transport</keyword>